<feature type="chain" id="PRO_0000120552" description="Ureidoglycolate lyase">
    <location>
        <begin position="1"/>
        <end position="170"/>
    </location>
</feature>
<evidence type="ECO:0000255" key="1">
    <source>
        <dbReference type="HAMAP-Rule" id="MF_00616"/>
    </source>
</evidence>
<sequence>MRTLTIEPLTKDAFAPFGDVIETDGSDHFMINNGSTMRFHRLAEVDTAQPDDKAIISIFRAESLPMPLTIGMLERHPQGSQAFIPLLGNPFLIVVAPVGDAPESALTRAFVSNGRQGVNYHRGVWHHPVLTIEKQDDFLVVDRSGSGNNCDEHYFEENQRLVLDPNPQEG</sequence>
<keyword id="KW-0456">Lyase</keyword>
<keyword id="KW-0659">Purine metabolism</keyword>
<keyword id="KW-1185">Reference proteome</keyword>
<dbReference type="EC" id="4.3.2.3" evidence="1"/>
<dbReference type="EMBL" id="AE016853">
    <property type="protein sequence ID" value="AAO57138.1"/>
    <property type="molecule type" value="Genomic_DNA"/>
</dbReference>
<dbReference type="RefSeq" id="NP_793443.1">
    <property type="nucleotide sequence ID" value="NC_004578.1"/>
</dbReference>
<dbReference type="RefSeq" id="WP_005765323.1">
    <property type="nucleotide sequence ID" value="NC_004578.1"/>
</dbReference>
<dbReference type="SMR" id="Q87YX3"/>
<dbReference type="STRING" id="223283.PSPTO_3669"/>
<dbReference type="GeneID" id="1185334"/>
<dbReference type="KEGG" id="pst:PSPTO_3669"/>
<dbReference type="PATRIC" id="fig|223283.9.peg.3760"/>
<dbReference type="eggNOG" id="COG3194">
    <property type="taxonomic scope" value="Bacteria"/>
</dbReference>
<dbReference type="HOGENOM" id="CLU_070848_1_0_6"/>
<dbReference type="OrthoDB" id="9804602at2"/>
<dbReference type="PhylomeDB" id="Q87YX3"/>
<dbReference type="UniPathway" id="UPA00395"/>
<dbReference type="Proteomes" id="UP000002515">
    <property type="component" value="Chromosome"/>
</dbReference>
<dbReference type="GO" id="GO:0004848">
    <property type="term" value="F:ureidoglycolate hydrolase activity"/>
    <property type="evidence" value="ECO:0007669"/>
    <property type="project" value="InterPro"/>
</dbReference>
<dbReference type="GO" id="GO:0050385">
    <property type="term" value="F:ureidoglycolate lyase activity"/>
    <property type="evidence" value="ECO:0007669"/>
    <property type="project" value="UniProtKB-UniRule"/>
</dbReference>
<dbReference type="GO" id="GO:0000256">
    <property type="term" value="P:allantoin catabolic process"/>
    <property type="evidence" value="ECO:0007669"/>
    <property type="project" value="UniProtKB-UniRule"/>
</dbReference>
<dbReference type="GO" id="GO:0006145">
    <property type="term" value="P:purine nucleobase catabolic process"/>
    <property type="evidence" value="ECO:0007669"/>
    <property type="project" value="UniProtKB-UniRule"/>
</dbReference>
<dbReference type="CDD" id="cd20298">
    <property type="entry name" value="cupin_UAH"/>
    <property type="match status" value="1"/>
</dbReference>
<dbReference type="Gene3D" id="2.60.120.480">
    <property type="entry name" value="Ureidoglycolate hydrolase"/>
    <property type="match status" value="1"/>
</dbReference>
<dbReference type="HAMAP" id="MF_00616">
    <property type="entry name" value="Ureidogly_lyase"/>
    <property type="match status" value="1"/>
</dbReference>
<dbReference type="InterPro" id="IPR011051">
    <property type="entry name" value="RmlC_Cupin_sf"/>
</dbReference>
<dbReference type="InterPro" id="IPR047233">
    <property type="entry name" value="UAH_cupin"/>
</dbReference>
<dbReference type="InterPro" id="IPR007247">
    <property type="entry name" value="Ureidogly_lyase"/>
</dbReference>
<dbReference type="InterPro" id="IPR023525">
    <property type="entry name" value="Ureidogly_lyase_bac"/>
</dbReference>
<dbReference type="InterPro" id="IPR024060">
    <property type="entry name" value="Ureidoglycolate_lyase_dom_sf"/>
</dbReference>
<dbReference type="NCBIfam" id="NF002949">
    <property type="entry name" value="PRK03606.1-2"/>
    <property type="match status" value="1"/>
</dbReference>
<dbReference type="NCBIfam" id="NF009932">
    <property type="entry name" value="PRK13395.1"/>
    <property type="match status" value="1"/>
</dbReference>
<dbReference type="PANTHER" id="PTHR21221">
    <property type="entry name" value="UREIDOGLYCOLATE HYDROLASE"/>
    <property type="match status" value="1"/>
</dbReference>
<dbReference type="PANTHER" id="PTHR21221:SF1">
    <property type="entry name" value="UREIDOGLYCOLATE LYASE"/>
    <property type="match status" value="1"/>
</dbReference>
<dbReference type="Pfam" id="PF04115">
    <property type="entry name" value="Ureidogly_lyase"/>
    <property type="match status" value="1"/>
</dbReference>
<dbReference type="PIRSF" id="PIRSF017306">
    <property type="entry name" value="Ureidogly_hydro"/>
    <property type="match status" value="1"/>
</dbReference>
<dbReference type="SUPFAM" id="SSF51182">
    <property type="entry name" value="RmlC-like cupins"/>
    <property type="match status" value="1"/>
</dbReference>
<name>ALLA_PSESM</name>
<accession>Q87YX3</accession>
<organism>
    <name type="scientific">Pseudomonas syringae pv. tomato (strain ATCC BAA-871 / DC3000)</name>
    <dbReference type="NCBI Taxonomy" id="223283"/>
    <lineage>
        <taxon>Bacteria</taxon>
        <taxon>Pseudomonadati</taxon>
        <taxon>Pseudomonadota</taxon>
        <taxon>Gammaproteobacteria</taxon>
        <taxon>Pseudomonadales</taxon>
        <taxon>Pseudomonadaceae</taxon>
        <taxon>Pseudomonas</taxon>
    </lineage>
</organism>
<protein>
    <recommendedName>
        <fullName evidence="1">Ureidoglycolate lyase</fullName>
        <ecNumber evidence="1">4.3.2.3</ecNumber>
    </recommendedName>
    <alternativeName>
        <fullName evidence="1">Ureidoglycolatase</fullName>
    </alternativeName>
</protein>
<gene>
    <name evidence="1" type="primary">allA</name>
    <name type="ordered locus">PSPTO_3669</name>
</gene>
<reference key="1">
    <citation type="journal article" date="2003" name="Proc. Natl. Acad. Sci. U.S.A.">
        <title>The complete genome sequence of the Arabidopsis and tomato pathogen Pseudomonas syringae pv. tomato DC3000.</title>
        <authorList>
            <person name="Buell C.R."/>
            <person name="Joardar V."/>
            <person name="Lindeberg M."/>
            <person name="Selengut J."/>
            <person name="Paulsen I.T."/>
            <person name="Gwinn M.L."/>
            <person name="Dodson R.J."/>
            <person name="DeBoy R.T."/>
            <person name="Durkin A.S."/>
            <person name="Kolonay J.F."/>
            <person name="Madupu R."/>
            <person name="Daugherty S.C."/>
            <person name="Brinkac L.M."/>
            <person name="Beanan M.J."/>
            <person name="Haft D.H."/>
            <person name="Nelson W.C."/>
            <person name="Davidsen T.M."/>
            <person name="Zafar N."/>
            <person name="Zhou L."/>
            <person name="Liu J."/>
            <person name="Yuan Q."/>
            <person name="Khouri H.M."/>
            <person name="Fedorova N.B."/>
            <person name="Tran B."/>
            <person name="Russell D."/>
            <person name="Berry K.J."/>
            <person name="Utterback T.R."/>
            <person name="Van Aken S.E."/>
            <person name="Feldblyum T.V."/>
            <person name="D'Ascenzo M."/>
            <person name="Deng W.-L."/>
            <person name="Ramos A.R."/>
            <person name="Alfano J.R."/>
            <person name="Cartinhour S."/>
            <person name="Chatterjee A.K."/>
            <person name="Delaney T.P."/>
            <person name="Lazarowitz S.G."/>
            <person name="Martin G.B."/>
            <person name="Schneider D.J."/>
            <person name="Tang X."/>
            <person name="Bender C.L."/>
            <person name="White O."/>
            <person name="Fraser C.M."/>
            <person name="Collmer A."/>
        </authorList>
    </citation>
    <scope>NUCLEOTIDE SEQUENCE [LARGE SCALE GENOMIC DNA]</scope>
    <source>
        <strain>ATCC BAA-871 / DC3000</strain>
    </source>
</reference>
<proteinExistence type="inferred from homology"/>
<comment type="function">
    <text evidence="1">Catalyzes the catabolism of the allantoin degradation intermediate (S)-ureidoglycolate, generating urea and glyoxylate. Involved in the utilization of allantoin as nitrogen source.</text>
</comment>
<comment type="catalytic activity">
    <reaction evidence="1">
        <text>(S)-ureidoglycolate = urea + glyoxylate</text>
        <dbReference type="Rhea" id="RHEA:11304"/>
        <dbReference type="ChEBI" id="CHEBI:16199"/>
        <dbReference type="ChEBI" id="CHEBI:36655"/>
        <dbReference type="ChEBI" id="CHEBI:57296"/>
        <dbReference type="EC" id="4.3.2.3"/>
    </reaction>
</comment>
<comment type="cofactor">
    <cofactor evidence="1">
        <name>Ni(2+)</name>
        <dbReference type="ChEBI" id="CHEBI:49786"/>
    </cofactor>
</comment>
<comment type="pathway">
    <text evidence="1">Nitrogen metabolism; (S)-allantoin degradation.</text>
</comment>
<comment type="subunit">
    <text evidence="1">Homodimer.</text>
</comment>
<comment type="similarity">
    <text evidence="1">Belongs to the ureidoglycolate lyase family.</text>
</comment>